<evidence type="ECO:0000255" key="1">
    <source>
        <dbReference type="HAMAP-Rule" id="MF_00743"/>
    </source>
</evidence>
<comment type="function">
    <text evidence="1">Involved in the TCA cycle. Catalyzes the stereospecific interconversion of fumarate to L-malate.</text>
</comment>
<comment type="catalytic activity">
    <reaction evidence="1">
        <text>(S)-malate = fumarate + H2O</text>
        <dbReference type="Rhea" id="RHEA:12460"/>
        <dbReference type="ChEBI" id="CHEBI:15377"/>
        <dbReference type="ChEBI" id="CHEBI:15589"/>
        <dbReference type="ChEBI" id="CHEBI:29806"/>
        <dbReference type="EC" id="4.2.1.2"/>
    </reaction>
</comment>
<comment type="pathway">
    <text evidence="1">Carbohydrate metabolism; tricarboxylic acid cycle; (S)-malate from fumarate: step 1/1.</text>
</comment>
<comment type="subunit">
    <text evidence="1">Homotetramer.</text>
</comment>
<comment type="subcellular location">
    <subcellularLocation>
        <location evidence="1">Cytoplasm</location>
    </subcellularLocation>
</comment>
<comment type="miscellaneous">
    <text evidence="1">There are 2 substrate-binding sites: the catalytic A site, and the non-catalytic B site that may play a role in the transfer of substrate or product between the active site and the solvent. Alternatively, the B site may bind allosteric effectors.</text>
</comment>
<comment type="similarity">
    <text evidence="1">Belongs to the class-II fumarase/aspartase family. Fumarase subfamily.</text>
</comment>
<sequence>MVTVRREKDSMGAIEVPADKLWGAQTQRSLEHFRISTEKMPVSLIHALALTKRAAAKVNQDLGLLAAEKASAIIQAADEVLAGKHADEFPLAIWQTGSGTQSNMNMNEVLANRASEILGGVRGMERKVHPNDDVNKSQSSNDVFPTAMHVAALLALREHLIPQLSALTDTLRDKSHAFADIVKIGRTHLQDATPLTLGQEISGWVAMLEHNLRHIEHSLPHVAELALGGTAVGTGLNTHPEYARRVAEELATITAAPFVTAPNKFEALATCDALVQAHGALKGLAASLMKIANDVRWLASGPRCGIGEIAIPENEPGSSIMPGKVNPTQCEAVTMLCCQVMGNDVAINMGGASGNFELNVYRPMVIHNFLQTVRLLADGMESFNKHCASGIEPNRERITQLLNESLMLVTALNTHIGYDKAAEIAKKAHKEGLTLKASAVALGYLSDEEFDAWVRPELMVGSMTPGR</sequence>
<feature type="chain" id="PRO_0000161309" description="Fumarate hydratase class II">
    <location>
        <begin position="1"/>
        <end position="467"/>
    </location>
</feature>
<feature type="active site" description="Proton donor/acceptor" evidence="1">
    <location>
        <position position="188"/>
    </location>
</feature>
<feature type="active site" evidence="1">
    <location>
        <position position="318"/>
    </location>
</feature>
<feature type="binding site" evidence="1">
    <location>
        <begin position="98"/>
        <end position="100"/>
    </location>
    <ligand>
        <name>substrate</name>
    </ligand>
</feature>
<feature type="binding site" evidence="1">
    <location>
        <position position="126"/>
    </location>
    <ligand>
        <name>substrate</name>
    </ligand>
</feature>
<feature type="binding site" description="in site B" evidence="1">
    <location>
        <begin position="129"/>
        <end position="132"/>
    </location>
    <ligand>
        <name>substrate</name>
    </ligand>
</feature>
<feature type="binding site" evidence="1">
    <location>
        <begin position="139"/>
        <end position="141"/>
    </location>
    <ligand>
        <name>substrate</name>
    </ligand>
</feature>
<feature type="binding site" evidence="1">
    <location>
        <position position="187"/>
    </location>
    <ligand>
        <name>substrate</name>
    </ligand>
</feature>
<feature type="binding site" evidence="1">
    <location>
        <position position="319"/>
    </location>
    <ligand>
        <name>substrate</name>
    </ligand>
</feature>
<feature type="binding site" evidence="1">
    <location>
        <begin position="324"/>
        <end position="326"/>
    </location>
    <ligand>
        <name>substrate</name>
    </ligand>
</feature>
<feature type="site" description="Important for catalytic activity" evidence="1">
    <location>
        <position position="331"/>
    </location>
</feature>
<name>FUMC_SALTY</name>
<proteinExistence type="inferred from homology"/>
<keyword id="KW-0963">Cytoplasm</keyword>
<keyword id="KW-0456">Lyase</keyword>
<keyword id="KW-1185">Reference proteome</keyword>
<keyword id="KW-0816">Tricarboxylic acid cycle</keyword>
<dbReference type="EC" id="4.2.1.2" evidence="1"/>
<dbReference type="EMBL" id="AE006468">
    <property type="protein sequence ID" value="AAL20389.1"/>
    <property type="molecule type" value="Genomic_DNA"/>
</dbReference>
<dbReference type="RefSeq" id="NP_460430.1">
    <property type="nucleotide sequence ID" value="NC_003197.2"/>
</dbReference>
<dbReference type="RefSeq" id="WP_000259121.1">
    <property type="nucleotide sequence ID" value="NC_003197.2"/>
</dbReference>
<dbReference type="SMR" id="Q8ZPL7"/>
<dbReference type="STRING" id="99287.STM1469"/>
<dbReference type="PaxDb" id="99287-STM1469"/>
<dbReference type="GeneID" id="1252987"/>
<dbReference type="KEGG" id="stm:STM1469"/>
<dbReference type="PATRIC" id="fig|99287.12.peg.1551"/>
<dbReference type="HOGENOM" id="CLU_021594_4_1_6"/>
<dbReference type="OMA" id="AKWRAQT"/>
<dbReference type="PhylomeDB" id="Q8ZPL7"/>
<dbReference type="BioCyc" id="SENT99287:STM1469-MONOMER"/>
<dbReference type="UniPathway" id="UPA00223">
    <property type="reaction ID" value="UER01007"/>
</dbReference>
<dbReference type="PHI-base" id="PHI:10048"/>
<dbReference type="Proteomes" id="UP000001014">
    <property type="component" value="Chromosome"/>
</dbReference>
<dbReference type="GO" id="GO:0005737">
    <property type="term" value="C:cytoplasm"/>
    <property type="evidence" value="ECO:0007669"/>
    <property type="project" value="UniProtKB-SubCell"/>
</dbReference>
<dbReference type="GO" id="GO:0004333">
    <property type="term" value="F:fumarate hydratase activity"/>
    <property type="evidence" value="ECO:0000318"/>
    <property type="project" value="GO_Central"/>
</dbReference>
<dbReference type="GO" id="GO:0006106">
    <property type="term" value="P:fumarate metabolic process"/>
    <property type="evidence" value="ECO:0000318"/>
    <property type="project" value="GO_Central"/>
</dbReference>
<dbReference type="GO" id="GO:0006108">
    <property type="term" value="P:malate metabolic process"/>
    <property type="evidence" value="ECO:0000318"/>
    <property type="project" value="GO_Central"/>
</dbReference>
<dbReference type="GO" id="GO:0006099">
    <property type="term" value="P:tricarboxylic acid cycle"/>
    <property type="evidence" value="ECO:0000318"/>
    <property type="project" value="GO_Central"/>
</dbReference>
<dbReference type="CDD" id="cd01362">
    <property type="entry name" value="Fumarase_classII"/>
    <property type="match status" value="1"/>
</dbReference>
<dbReference type="FunFam" id="1.10.40.30:FF:000002">
    <property type="entry name" value="Fumarate hydratase class II"/>
    <property type="match status" value="1"/>
</dbReference>
<dbReference type="FunFam" id="1.10.275.10:FF:000001">
    <property type="entry name" value="Fumarate hydratase, mitochondrial"/>
    <property type="match status" value="1"/>
</dbReference>
<dbReference type="FunFam" id="1.20.200.10:FF:000001">
    <property type="entry name" value="Fumarate hydratase, mitochondrial"/>
    <property type="match status" value="1"/>
</dbReference>
<dbReference type="Gene3D" id="1.10.40.30">
    <property type="entry name" value="Fumarase/aspartase (C-terminal domain)"/>
    <property type="match status" value="1"/>
</dbReference>
<dbReference type="Gene3D" id="1.20.200.10">
    <property type="entry name" value="Fumarase/aspartase (Central domain)"/>
    <property type="match status" value="1"/>
</dbReference>
<dbReference type="Gene3D" id="1.10.275.10">
    <property type="entry name" value="Fumarase/aspartase (N-terminal domain)"/>
    <property type="match status" value="1"/>
</dbReference>
<dbReference type="HAMAP" id="MF_00743">
    <property type="entry name" value="FumaraseC"/>
    <property type="match status" value="1"/>
</dbReference>
<dbReference type="InterPro" id="IPR005677">
    <property type="entry name" value="Fum_hydII"/>
</dbReference>
<dbReference type="InterPro" id="IPR024083">
    <property type="entry name" value="Fumarase/histidase_N"/>
</dbReference>
<dbReference type="InterPro" id="IPR018951">
    <property type="entry name" value="Fumarase_C_C"/>
</dbReference>
<dbReference type="InterPro" id="IPR020557">
    <property type="entry name" value="Fumarate_lyase_CS"/>
</dbReference>
<dbReference type="InterPro" id="IPR000362">
    <property type="entry name" value="Fumarate_lyase_fam"/>
</dbReference>
<dbReference type="InterPro" id="IPR022761">
    <property type="entry name" value="Fumarate_lyase_N"/>
</dbReference>
<dbReference type="InterPro" id="IPR008948">
    <property type="entry name" value="L-Aspartase-like"/>
</dbReference>
<dbReference type="NCBIfam" id="TIGR00979">
    <property type="entry name" value="fumC_II"/>
    <property type="match status" value="1"/>
</dbReference>
<dbReference type="NCBIfam" id="NF008909">
    <property type="entry name" value="PRK12273.1"/>
    <property type="match status" value="1"/>
</dbReference>
<dbReference type="PANTHER" id="PTHR11444">
    <property type="entry name" value="ASPARTATEAMMONIA/ARGININOSUCCINATE/ADENYLOSUCCINATE LYASE"/>
    <property type="match status" value="1"/>
</dbReference>
<dbReference type="PANTHER" id="PTHR11444:SF1">
    <property type="entry name" value="FUMARATE HYDRATASE, MITOCHONDRIAL"/>
    <property type="match status" value="1"/>
</dbReference>
<dbReference type="Pfam" id="PF10415">
    <property type="entry name" value="FumaraseC_C"/>
    <property type="match status" value="1"/>
</dbReference>
<dbReference type="Pfam" id="PF00206">
    <property type="entry name" value="Lyase_1"/>
    <property type="match status" value="1"/>
</dbReference>
<dbReference type="PRINTS" id="PR00145">
    <property type="entry name" value="ARGSUCLYASE"/>
</dbReference>
<dbReference type="PRINTS" id="PR00149">
    <property type="entry name" value="FUMRATELYASE"/>
</dbReference>
<dbReference type="SUPFAM" id="SSF48557">
    <property type="entry name" value="L-aspartase-like"/>
    <property type="match status" value="1"/>
</dbReference>
<dbReference type="PROSITE" id="PS00163">
    <property type="entry name" value="FUMARATE_LYASES"/>
    <property type="match status" value="1"/>
</dbReference>
<organism>
    <name type="scientific">Salmonella typhimurium (strain LT2 / SGSC1412 / ATCC 700720)</name>
    <dbReference type="NCBI Taxonomy" id="99287"/>
    <lineage>
        <taxon>Bacteria</taxon>
        <taxon>Pseudomonadati</taxon>
        <taxon>Pseudomonadota</taxon>
        <taxon>Gammaproteobacteria</taxon>
        <taxon>Enterobacterales</taxon>
        <taxon>Enterobacteriaceae</taxon>
        <taxon>Salmonella</taxon>
    </lineage>
</organism>
<protein>
    <recommendedName>
        <fullName evidence="1">Fumarate hydratase class II</fullName>
        <shortName evidence="1">Fumarase C</shortName>
        <ecNumber evidence="1">4.2.1.2</ecNumber>
    </recommendedName>
    <alternativeName>
        <fullName evidence="1">Aerobic fumarase</fullName>
    </alternativeName>
    <alternativeName>
        <fullName evidence="1">Iron-independent fumarase</fullName>
    </alternativeName>
</protein>
<gene>
    <name evidence="1" type="primary">fumC</name>
    <name type="ordered locus">STM1469</name>
</gene>
<reference key="1">
    <citation type="journal article" date="2001" name="Nature">
        <title>Complete genome sequence of Salmonella enterica serovar Typhimurium LT2.</title>
        <authorList>
            <person name="McClelland M."/>
            <person name="Sanderson K.E."/>
            <person name="Spieth J."/>
            <person name="Clifton S.W."/>
            <person name="Latreille P."/>
            <person name="Courtney L."/>
            <person name="Porwollik S."/>
            <person name="Ali J."/>
            <person name="Dante M."/>
            <person name="Du F."/>
            <person name="Hou S."/>
            <person name="Layman D."/>
            <person name="Leonard S."/>
            <person name="Nguyen C."/>
            <person name="Scott K."/>
            <person name="Holmes A."/>
            <person name="Grewal N."/>
            <person name="Mulvaney E."/>
            <person name="Ryan E."/>
            <person name="Sun H."/>
            <person name="Florea L."/>
            <person name="Miller W."/>
            <person name="Stoneking T."/>
            <person name="Nhan M."/>
            <person name="Waterston R."/>
            <person name="Wilson R.K."/>
        </authorList>
    </citation>
    <scope>NUCLEOTIDE SEQUENCE [LARGE SCALE GENOMIC DNA]</scope>
    <source>
        <strain>LT2 / SGSC1412 / ATCC 700720</strain>
    </source>
</reference>
<accession>Q8ZPL7</accession>